<gene>
    <name type="primary">SLC10A3</name>
</gene>
<protein>
    <recommendedName>
        <fullName>P3 protein</fullName>
    </recommendedName>
    <alternativeName>
        <fullName>Solute carrier family 10 member 3</fullName>
    </alternativeName>
</protein>
<proteinExistence type="evidence at transcript level"/>
<accession>Q0V8N6</accession>
<comment type="function">
    <text evidence="1">The ubiquitous expression and the conservation of the sequence in distant animal species suggest that the gene codes for a protein with housekeeping functions.</text>
</comment>
<comment type="subcellular location">
    <subcellularLocation>
        <location evidence="4">Membrane</location>
        <topology evidence="4">Multi-pass membrane protein</topology>
    </subcellularLocation>
</comment>
<comment type="similarity">
    <text evidence="4">Belongs to the bile acid:sodium symporter (BASS) (TC 2.A.28) family.</text>
</comment>
<name>P3_BOVIN</name>
<keyword id="KW-0472">Membrane</keyword>
<keyword id="KW-1185">Reference proteome</keyword>
<keyword id="KW-0769">Symport</keyword>
<keyword id="KW-0812">Transmembrane</keyword>
<keyword id="KW-1133">Transmembrane helix</keyword>
<keyword id="KW-0813">Transport</keyword>
<sequence length="477" mass="50656">MVFRSGEGHSLQWPGPEGGTGCTGPQSMLRATLLLVSLLWGARGTPSASLSPALGHPMPLTRGRYLSIGDGSVMEFEFPEESEGIIVITSQYPGQGNGTGPSPMLRVTSLDPEVLAIKNVSSIALGSGGSFVVSIRSGLPGIAPLHIQLTDPREAPPRLIEERRDFCIKVSPAEDTPITLGTDLVHFSENPILYLLLPLIFVNKCSFGCKVELEVLKGLLQNPQPMLLGLLGQFLVMPFYAFLMAKVFMLPKALALGLIITCSSPGGGGSYLFSLLLGGDVTLAISMTFISTVAATGFLPLSSAIYSRLLSIHETLHVPVSKILGTLLFIAIPIAAGVVIKSKLPKFSQLLLHVIKPFSFVLLLGGLFLAYRMGVFILAGVRLPIVLVGFTVPLVGLLVGYGLATCLKLPVAQRRTVSIEVGVQNSLLALAMLQLSLRRLQADYASQAPFLVALSGTSEMLALVIGHFIYSSVCAVP</sequence>
<organism>
    <name type="scientific">Bos taurus</name>
    <name type="common">Bovine</name>
    <dbReference type="NCBI Taxonomy" id="9913"/>
    <lineage>
        <taxon>Eukaryota</taxon>
        <taxon>Metazoa</taxon>
        <taxon>Chordata</taxon>
        <taxon>Craniata</taxon>
        <taxon>Vertebrata</taxon>
        <taxon>Euteleostomi</taxon>
        <taxon>Mammalia</taxon>
        <taxon>Eutheria</taxon>
        <taxon>Laurasiatheria</taxon>
        <taxon>Artiodactyla</taxon>
        <taxon>Ruminantia</taxon>
        <taxon>Pecora</taxon>
        <taxon>Bovidae</taxon>
        <taxon>Bovinae</taxon>
        <taxon>Bos</taxon>
    </lineage>
</organism>
<reference key="1">
    <citation type="journal article" date="2005" name="BMC Genomics">
        <title>Characterization of 954 bovine full-CDS cDNA sequences.</title>
        <authorList>
            <person name="Harhay G.P."/>
            <person name="Sonstegard T.S."/>
            <person name="Keele J.W."/>
            <person name="Heaton M.P."/>
            <person name="Clawson M.L."/>
            <person name="Snelling W.M."/>
            <person name="Wiedmann R.T."/>
            <person name="Van Tassell C.P."/>
            <person name="Smith T.P.L."/>
        </authorList>
    </citation>
    <scope>NUCLEOTIDE SEQUENCE [LARGE SCALE MRNA]</scope>
</reference>
<reference key="2">
    <citation type="submission" date="2006-09" db="EMBL/GenBank/DDBJ databases">
        <authorList>
            <consortium name="NIH - Mammalian Gene Collection (MGC) project"/>
        </authorList>
    </citation>
    <scope>NUCLEOTIDE SEQUENCE [LARGE SCALE MRNA]</scope>
    <source>
        <strain>Hereford</strain>
        <tissue>Thalamus</tissue>
    </source>
</reference>
<dbReference type="EMBL" id="BT026182">
    <property type="protein sequence ID" value="ABG67021.1"/>
    <property type="molecule type" value="mRNA"/>
</dbReference>
<dbReference type="EMBL" id="BC123710">
    <property type="protein sequence ID" value="AAI23711.1"/>
    <property type="molecule type" value="mRNA"/>
</dbReference>
<dbReference type="RefSeq" id="NP_001068633.1">
    <property type="nucleotide sequence ID" value="NM_001075165.1"/>
</dbReference>
<dbReference type="RefSeq" id="XP_010819859.1">
    <property type="nucleotide sequence ID" value="XM_010821557.3"/>
</dbReference>
<dbReference type="RefSeq" id="XP_010819860.1">
    <property type="nucleotide sequence ID" value="XM_010821558.3"/>
</dbReference>
<dbReference type="RefSeq" id="XP_010819861.1">
    <property type="nucleotide sequence ID" value="XM_010821559.4"/>
</dbReference>
<dbReference type="SMR" id="Q0V8N6"/>
<dbReference type="FunCoup" id="Q0V8N6">
    <property type="interactions" value="313"/>
</dbReference>
<dbReference type="STRING" id="9913.ENSBTAP00000019057"/>
<dbReference type="TCDB" id="2.A.28.1.5">
    <property type="family name" value="the bile acid:na(+) symporter (bass) family"/>
</dbReference>
<dbReference type="PaxDb" id="9913-ENSBTAP00000019057"/>
<dbReference type="Ensembl" id="ENSBTAT00000019057.4">
    <property type="protein sequence ID" value="ENSBTAP00000019057.2"/>
    <property type="gene ID" value="ENSBTAG00000014333.4"/>
</dbReference>
<dbReference type="Ensembl" id="ENSBTAT00000111346.1">
    <property type="protein sequence ID" value="ENSBTAP00000078462.1"/>
    <property type="gene ID" value="ENSBTAG00000014333.4"/>
</dbReference>
<dbReference type="Ensembl" id="ENSBTAT00000118876.1">
    <property type="protein sequence ID" value="ENSBTAP00000084161.1"/>
    <property type="gene ID" value="ENSBTAG00000014333.4"/>
</dbReference>
<dbReference type="GeneID" id="504534"/>
<dbReference type="KEGG" id="bta:504534"/>
<dbReference type="CTD" id="8273"/>
<dbReference type="VEuPathDB" id="HostDB:ENSBTAG00000014333"/>
<dbReference type="VGNC" id="VGNC:34660">
    <property type="gene designation" value="SLC10A3"/>
</dbReference>
<dbReference type="eggNOG" id="KOG2718">
    <property type="taxonomic scope" value="Eukaryota"/>
</dbReference>
<dbReference type="GeneTree" id="ENSGT00950000182808"/>
<dbReference type="HOGENOM" id="CLU_034788_2_0_1"/>
<dbReference type="InParanoid" id="Q0V8N6"/>
<dbReference type="OMA" id="IQLMDPH"/>
<dbReference type="OrthoDB" id="203097at2759"/>
<dbReference type="TreeFam" id="TF315811"/>
<dbReference type="Proteomes" id="UP000009136">
    <property type="component" value="Chromosome X"/>
</dbReference>
<dbReference type="Bgee" id="ENSBTAG00000014333">
    <property type="expression patterns" value="Expressed in corpus epididymis and 104 other cell types or tissues"/>
</dbReference>
<dbReference type="GO" id="GO:0016020">
    <property type="term" value="C:membrane"/>
    <property type="evidence" value="ECO:0007669"/>
    <property type="project" value="UniProtKB-SubCell"/>
</dbReference>
<dbReference type="GO" id="GO:0008508">
    <property type="term" value="F:bile acid:sodium symporter activity"/>
    <property type="evidence" value="ECO:0000318"/>
    <property type="project" value="GO_Central"/>
</dbReference>
<dbReference type="GO" id="GO:0015721">
    <property type="term" value="P:bile acid and bile salt transport"/>
    <property type="evidence" value="ECO:0000318"/>
    <property type="project" value="GO_Central"/>
</dbReference>
<dbReference type="GO" id="GO:0032526">
    <property type="term" value="P:response to retinoic acid"/>
    <property type="evidence" value="ECO:0007669"/>
    <property type="project" value="Ensembl"/>
</dbReference>
<dbReference type="FunFam" id="1.20.1530.20:FF:000014">
    <property type="entry name" value="Solute carrier family 10 member 3"/>
    <property type="match status" value="1"/>
</dbReference>
<dbReference type="Gene3D" id="1.20.1530.20">
    <property type="match status" value="1"/>
</dbReference>
<dbReference type="InterPro" id="IPR002657">
    <property type="entry name" value="BilAc:Na_symport/Acr3"/>
</dbReference>
<dbReference type="InterPro" id="IPR004710">
    <property type="entry name" value="Bilac:Na_transpt"/>
</dbReference>
<dbReference type="InterPro" id="IPR038770">
    <property type="entry name" value="Na+/solute_symporter_sf"/>
</dbReference>
<dbReference type="PANTHER" id="PTHR10361:SF3">
    <property type="entry name" value="P3 PROTEIN"/>
    <property type="match status" value="1"/>
</dbReference>
<dbReference type="PANTHER" id="PTHR10361">
    <property type="entry name" value="SODIUM-BILE ACID COTRANSPORTER"/>
    <property type="match status" value="1"/>
</dbReference>
<dbReference type="Pfam" id="PF24690">
    <property type="entry name" value="NTCP5_P3_N"/>
    <property type="match status" value="1"/>
</dbReference>
<dbReference type="Pfam" id="PF01758">
    <property type="entry name" value="SBF"/>
    <property type="match status" value="1"/>
</dbReference>
<feature type="chain" id="PRO_0000283780" description="P3 protein">
    <location>
        <begin position="1"/>
        <end position="477"/>
    </location>
</feature>
<feature type="transmembrane region" description="Helical" evidence="2">
    <location>
        <begin position="225"/>
        <end position="245"/>
    </location>
</feature>
<feature type="transmembrane region" description="Helical" evidence="2">
    <location>
        <begin position="253"/>
        <end position="273"/>
    </location>
</feature>
<feature type="transmembrane region" description="Helical" evidence="2">
    <location>
        <begin position="281"/>
        <end position="301"/>
    </location>
</feature>
<feature type="transmembrane region" description="Helical" evidence="2">
    <location>
        <begin position="320"/>
        <end position="340"/>
    </location>
</feature>
<feature type="transmembrane region" description="Helical" evidence="2">
    <location>
        <begin position="361"/>
        <end position="381"/>
    </location>
</feature>
<feature type="transmembrane region" description="Helical" evidence="2">
    <location>
        <begin position="383"/>
        <end position="403"/>
    </location>
</feature>
<feature type="transmembrane region" description="Helical" evidence="2">
    <location>
        <begin position="417"/>
        <end position="437"/>
    </location>
</feature>
<feature type="transmembrane region" description="Helical" evidence="2">
    <location>
        <begin position="450"/>
        <end position="470"/>
    </location>
</feature>
<feature type="region of interest" description="Disordered" evidence="3">
    <location>
        <begin position="1"/>
        <end position="21"/>
    </location>
</feature>
<evidence type="ECO:0000250" key="1"/>
<evidence type="ECO:0000255" key="2"/>
<evidence type="ECO:0000256" key="3">
    <source>
        <dbReference type="SAM" id="MobiDB-lite"/>
    </source>
</evidence>
<evidence type="ECO:0000305" key="4"/>